<comment type="function">
    <text evidence="1">Catalyzes the reversible cyclization of carbamoyl aspartate to dihydroorotate.</text>
</comment>
<comment type="catalytic activity">
    <reaction evidence="1">
        <text>(S)-dihydroorotate + H2O = N-carbamoyl-L-aspartate + H(+)</text>
        <dbReference type="Rhea" id="RHEA:24296"/>
        <dbReference type="ChEBI" id="CHEBI:15377"/>
        <dbReference type="ChEBI" id="CHEBI:15378"/>
        <dbReference type="ChEBI" id="CHEBI:30864"/>
        <dbReference type="ChEBI" id="CHEBI:32814"/>
        <dbReference type="EC" id="3.5.2.3"/>
    </reaction>
</comment>
<comment type="cofactor">
    <cofactor evidence="1">
        <name>Zn(2+)</name>
        <dbReference type="ChEBI" id="CHEBI:29105"/>
    </cofactor>
    <text evidence="1">Binds 2 Zn(2+) ions per subunit.</text>
</comment>
<comment type="pathway">
    <text evidence="1">Pyrimidine metabolism; UMP biosynthesis via de novo pathway; (S)-dihydroorotate from bicarbonate: step 3/3.</text>
</comment>
<comment type="similarity">
    <text evidence="1">Belongs to the metallo-dependent hydrolases superfamily. DHOase family. Class I DHOase subfamily.</text>
</comment>
<protein>
    <recommendedName>
        <fullName evidence="1">Dihydroorotase</fullName>
        <shortName evidence="1">DHOase</shortName>
        <ecNumber evidence="1">3.5.2.3</ecNumber>
    </recommendedName>
</protein>
<name>PYRC_STRPN</name>
<organism>
    <name type="scientific">Streptococcus pneumoniae serotype 4 (strain ATCC BAA-334 / TIGR4)</name>
    <dbReference type="NCBI Taxonomy" id="170187"/>
    <lineage>
        <taxon>Bacteria</taxon>
        <taxon>Bacillati</taxon>
        <taxon>Bacillota</taxon>
        <taxon>Bacilli</taxon>
        <taxon>Lactobacillales</taxon>
        <taxon>Streptococcaceae</taxon>
        <taxon>Streptococcus</taxon>
    </lineage>
</organism>
<gene>
    <name evidence="1" type="primary">pyrC</name>
    <name type="ordered locus">SP_1167</name>
</gene>
<proteinExistence type="inferred from homology"/>
<feature type="chain" id="PRO_0000147255" description="Dihydroorotase">
    <location>
        <begin position="1"/>
        <end position="422"/>
    </location>
</feature>
<feature type="active site" evidence="1">
    <location>
        <position position="303"/>
    </location>
</feature>
<feature type="binding site" evidence="1">
    <location>
        <position position="59"/>
    </location>
    <ligand>
        <name>Zn(2+)</name>
        <dbReference type="ChEBI" id="CHEBI:29105"/>
        <label>1</label>
    </ligand>
</feature>
<feature type="binding site" evidence="1">
    <location>
        <begin position="61"/>
        <end position="63"/>
    </location>
    <ligand>
        <name>substrate</name>
    </ligand>
</feature>
<feature type="binding site" evidence="1">
    <location>
        <position position="61"/>
    </location>
    <ligand>
        <name>Zn(2+)</name>
        <dbReference type="ChEBI" id="CHEBI:29105"/>
        <label>1</label>
    </ligand>
</feature>
<feature type="binding site" evidence="1">
    <location>
        <position position="93"/>
    </location>
    <ligand>
        <name>substrate</name>
    </ligand>
</feature>
<feature type="binding site" evidence="1">
    <location>
        <position position="150"/>
    </location>
    <ligand>
        <name>Zn(2+)</name>
        <dbReference type="ChEBI" id="CHEBI:29105"/>
        <label>1</label>
    </ligand>
</feature>
<feature type="binding site" evidence="1">
    <location>
        <position position="150"/>
    </location>
    <ligand>
        <name>Zn(2+)</name>
        <dbReference type="ChEBI" id="CHEBI:29105"/>
        <label>2</label>
    </ligand>
</feature>
<feature type="binding site" evidence="1">
    <location>
        <position position="177"/>
    </location>
    <ligand>
        <name>Zn(2+)</name>
        <dbReference type="ChEBI" id="CHEBI:29105"/>
        <label>2</label>
    </ligand>
</feature>
<feature type="binding site" evidence="1">
    <location>
        <position position="230"/>
    </location>
    <ligand>
        <name>Zn(2+)</name>
        <dbReference type="ChEBI" id="CHEBI:29105"/>
        <label>2</label>
    </ligand>
</feature>
<feature type="binding site" evidence="1">
    <location>
        <position position="276"/>
    </location>
    <ligand>
        <name>substrate</name>
    </ligand>
</feature>
<feature type="binding site" evidence="1">
    <location>
        <position position="303"/>
    </location>
    <ligand>
        <name>Zn(2+)</name>
        <dbReference type="ChEBI" id="CHEBI:29105"/>
        <label>1</label>
    </ligand>
</feature>
<feature type="binding site" evidence="1">
    <location>
        <position position="307"/>
    </location>
    <ligand>
        <name>substrate</name>
    </ligand>
</feature>
<dbReference type="EC" id="3.5.2.3" evidence="1"/>
<dbReference type="EMBL" id="AE005672">
    <property type="protein sequence ID" value="AAK75276.1"/>
    <property type="molecule type" value="Genomic_DNA"/>
</dbReference>
<dbReference type="PIR" id="C95135">
    <property type="entry name" value="C95135"/>
</dbReference>
<dbReference type="RefSeq" id="WP_000924508.1">
    <property type="nucleotide sequence ID" value="NZ_CP155539.1"/>
</dbReference>
<dbReference type="SMR" id="Q97QN4"/>
<dbReference type="PaxDb" id="170187-SP_1167"/>
<dbReference type="EnsemblBacteria" id="AAK75276">
    <property type="protein sequence ID" value="AAK75276"/>
    <property type="gene ID" value="SP_1167"/>
</dbReference>
<dbReference type="KEGG" id="spn:SP_1167"/>
<dbReference type="eggNOG" id="COG0044">
    <property type="taxonomic scope" value="Bacteria"/>
</dbReference>
<dbReference type="PhylomeDB" id="Q97QN4"/>
<dbReference type="BioCyc" id="SPNE170187:G1FZB-1187-MONOMER"/>
<dbReference type="UniPathway" id="UPA00070">
    <property type="reaction ID" value="UER00117"/>
</dbReference>
<dbReference type="Proteomes" id="UP000000585">
    <property type="component" value="Chromosome"/>
</dbReference>
<dbReference type="GO" id="GO:0005737">
    <property type="term" value="C:cytoplasm"/>
    <property type="evidence" value="ECO:0007669"/>
    <property type="project" value="TreeGrafter"/>
</dbReference>
<dbReference type="GO" id="GO:0004038">
    <property type="term" value="F:allantoinase activity"/>
    <property type="evidence" value="ECO:0007669"/>
    <property type="project" value="TreeGrafter"/>
</dbReference>
<dbReference type="GO" id="GO:0004151">
    <property type="term" value="F:dihydroorotase activity"/>
    <property type="evidence" value="ECO:0007669"/>
    <property type="project" value="UniProtKB-UniRule"/>
</dbReference>
<dbReference type="GO" id="GO:0008270">
    <property type="term" value="F:zinc ion binding"/>
    <property type="evidence" value="ECO:0007669"/>
    <property type="project" value="UniProtKB-UniRule"/>
</dbReference>
<dbReference type="GO" id="GO:0044205">
    <property type="term" value="P:'de novo' UMP biosynthetic process"/>
    <property type="evidence" value="ECO:0007669"/>
    <property type="project" value="UniProtKB-UniRule"/>
</dbReference>
<dbReference type="GO" id="GO:0006145">
    <property type="term" value="P:purine nucleobase catabolic process"/>
    <property type="evidence" value="ECO:0007669"/>
    <property type="project" value="TreeGrafter"/>
</dbReference>
<dbReference type="CDD" id="cd01317">
    <property type="entry name" value="DHOase_IIa"/>
    <property type="match status" value="1"/>
</dbReference>
<dbReference type="Gene3D" id="3.20.20.140">
    <property type="entry name" value="Metal-dependent hydrolases"/>
    <property type="match status" value="1"/>
</dbReference>
<dbReference type="HAMAP" id="MF_00220_B">
    <property type="entry name" value="PyrC_classI_B"/>
    <property type="match status" value="1"/>
</dbReference>
<dbReference type="InterPro" id="IPR006680">
    <property type="entry name" value="Amidohydro-rel"/>
</dbReference>
<dbReference type="InterPro" id="IPR004722">
    <property type="entry name" value="DHOase"/>
</dbReference>
<dbReference type="InterPro" id="IPR050138">
    <property type="entry name" value="DHOase/Allantoinase_Hydrolase"/>
</dbReference>
<dbReference type="InterPro" id="IPR002195">
    <property type="entry name" value="Dihydroorotase_CS"/>
</dbReference>
<dbReference type="InterPro" id="IPR011059">
    <property type="entry name" value="Metal-dep_hydrolase_composite"/>
</dbReference>
<dbReference type="InterPro" id="IPR032466">
    <property type="entry name" value="Metal_Hydrolase"/>
</dbReference>
<dbReference type="NCBIfam" id="NF006839">
    <property type="entry name" value="PRK09357.1-4"/>
    <property type="match status" value="1"/>
</dbReference>
<dbReference type="NCBIfam" id="TIGR00857">
    <property type="entry name" value="pyrC_multi"/>
    <property type="match status" value="1"/>
</dbReference>
<dbReference type="PANTHER" id="PTHR43668">
    <property type="entry name" value="ALLANTOINASE"/>
    <property type="match status" value="1"/>
</dbReference>
<dbReference type="PANTHER" id="PTHR43668:SF2">
    <property type="entry name" value="ALLANTOINASE"/>
    <property type="match status" value="1"/>
</dbReference>
<dbReference type="Pfam" id="PF01979">
    <property type="entry name" value="Amidohydro_1"/>
    <property type="match status" value="1"/>
</dbReference>
<dbReference type="SUPFAM" id="SSF51338">
    <property type="entry name" value="Composite domain of metallo-dependent hydrolases"/>
    <property type="match status" value="1"/>
</dbReference>
<dbReference type="SUPFAM" id="SSF51556">
    <property type="entry name" value="Metallo-dependent hydrolases"/>
    <property type="match status" value="1"/>
</dbReference>
<dbReference type="PROSITE" id="PS00482">
    <property type="entry name" value="DIHYDROOROTASE_1"/>
    <property type="match status" value="1"/>
</dbReference>
<dbReference type="PROSITE" id="PS00483">
    <property type="entry name" value="DIHYDROOROTASE_2"/>
    <property type="match status" value="1"/>
</dbReference>
<evidence type="ECO:0000255" key="1">
    <source>
        <dbReference type="HAMAP-Rule" id="MF_00220"/>
    </source>
</evidence>
<sequence>MLLIKNGRVMDPKSGLDQVCDVLVQDGKIIKIASEITEEGAETIDATGLVVAPGLVDIHVHFREPGQTHKEDIHTGALAAAAGGFTTVVMMANTSPTISDVETLQAVLQSAAKEKINVKTVATITKNFNGKNLTDFKALLEAGAVGFSDDGIPLESSKIVKEAMEEAKKLNTFISLHEEDPGLNGVLGFNENIAREHFHICGATGVAEYAMMARDVMIAYATKAHVHIQHLSKEESVKVVEFAQGLGAEVTAEVAPQHFSKTEALLLTQGSNAKMNPPLRLESDRRAVIEGLKSGVITVIATDHAPHHVDEKNVEDITKAPSGMTGLETSLSLSLTYLVEAGELSLMELLEKMTYNPAKLYNFEAGYLAENGPADITIFDAKADRFVDSHFASKAANSPFIGETLKGQVKYTICKGQIVYQA</sequence>
<keyword id="KW-0378">Hydrolase</keyword>
<keyword id="KW-0479">Metal-binding</keyword>
<keyword id="KW-0665">Pyrimidine biosynthesis</keyword>
<keyword id="KW-1185">Reference proteome</keyword>
<keyword id="KW-0862">Zinc</keyword>
<accession>Q97QN4</accession>
<reference key="1">
    <citation type="journal article" date="2001" name="Science">
        <title>Complete genome sequence of a virulent isolate of Streptococcus pneumoniae.</title>
        <authorList>
            <person name="Tettelin H."/>
            <person name="Nelson K.E."/>
            <person name="Paulsen I.T."/>
            <person name="Eisen J.A."/>
            <person name="Read T.D."/>
            <person name="Peterson S.N."/>
            <person name="Heidelberg J.F."/>
            <person name="DeBoy R.T."/>
            <person name="Haft D.H."/>
            <person name="Dodson R.J."/>
            <person name="Durkin A.S."/>
            <person name="Gwinn M.L."/>
            <person name="Kolonay J.F."/>
            <person name="Nelson W.C."/>
            <person name="Peterson J.D."/>
            <person name="Umayam L.A."/>
            <person name="White O."/>
            <person name="Salzberg S.L."/>
            <person name="Lewis M.R."/>
            <person name="Radune D."/>
            <person name="Holtzapple E.K."/>
            <person name="Khouri H.M."/>
            <person name="Wolf A.M."/>
            <person name="Utterback T.R."/>
            <person name="Hansen C.L."/>
            <person name="McDonald L.A."/>
            <person name="Feldblyum T.V."/>
            <person name="Angiuoli S.V."/>
            <person name="Dickinson T."/>
            <person name="Hickey E.K."/>
            <person name="Holt I.E."/>
            <person name="Loftus B.J."/>
            <person name="Yang F."/>
            <person name="Smith H.O."/>
            <person name="Venter J.C."/>
            <person name="Dougherty B.A."/>
            <person name="Morrison D.A."/>
            <person name="Hollingshead S.K."/>
            <person name="Fraser C.M."/>
        </authorList>
    </citation>
    <scope>NUCLEOTIDE SEQUENCE [LARGE SCALE GENOMIC DNA]</scope>
    <source>
        <strain>ATCC BAA-334 / TIGR4</strain>
    </source>
</reference>